<evidence type="ECO:0000255" key="1">
    <source>
        <dbReference type="HAMAP-Rule" id="MF_01014"/>
    </source>
</evidence>
<accession>B4UDJ9</accession>
<feature type="chain" id="PRO_1000135076" description="1-(5-phosphoribosyl)-5-[(5-phosphoribosylamino)methylideneamino] imidazole-4-carboxamide isomerase">
    <location>
        <begin position="1"/>
        <end position="238"/>
    </location>
</feature>
<feature type="active site" description="Proton acceptor" evidence="1">
    <location>
        <position position="8"/>
    </location>
</feature>
<feature type="active site" description="Proton donor" evidence="1">
    <location>
        <position position="129"/>
    </location>
</feature>
<proteinExistence type="inferred from homology"/>
<gene>
    <name evidence="1" type="primary">hisA</name>
    <name type="ordered locus">AnaeK_0751</name>
</gene>
<keyword id="KW-0028">Amino-acid biosynthesis</keyword>
<keyword id="KW-0963">Cytoplasm</keyword>
<keyword id="KW-0368">Histidine biosynthesis</keyword>
<keyword id="KW-0413">Isomerase</keyword>
<protein>
    <recommendedName>
        <fullName evidence="1">1-(5-phosphoribosyl)-5-[(5-phosphoribosylamino)methylideneamino] imidazole-4-carboxamide isomerase</fullName>
        <ecNumber evidence="1">5.3.1.16</ecNumber>
    </recommendedName>
    <alternativeName>
        <fullName evidence="1">Phosphoribosylformimino-5-aminoimidazole carboxamide ribotide isomerase</fullName>
    </alternativeName>
</protein>
<name>HIS4_ANASK</name>
<comment type="catalytic activity">
    <reaction evidence="1">
        <text>1-(5-phospho-beta-D-ribosyl)-5-[(5-phospho-beta-D-ribosylamino)methylideneamino]imidazole-4-carboxamide = 5-[(5-phospho-1-deoxy-D-ribulos-1-ylimino)methylamino]-1-(5-phospho-beta-D-ribosyl)imidazole-4-carboxamide</text>
        <dbReference type="Rhea" id="RHEA:15469"/>
        <dbReference type="ChEBI" id="CHEBI:58435"/>
        <dbReference type="ChEBI" id="CHEBI:58525"/>
        <dbReference type="EC" id="5.3.1.16"/>
    </reaction>
</comment>
<comment type="pathway">
    <text evidence="1">Amino-acid biosynthesis; L-histidine biosynthesis; L-histidine from 5-phospho-alpha-D-ribose 1-diphosphate: step 4/9.</text>
</comment>
<comment type="subcellular location">
    <subcellularLocation>
        <location evidence="1">Cytoplasm</location>
    </subcellularLocation>
</comment>
<comment type="similarity">
    <text evidence="1">Belongs to the HisA/HisF family.</text>
</comment>
<organism>
    <name type="scientific">Anaeromyxobacter sp. (strain K)</name>
    <dbReference type="NCBI Taxonomy" id="447217"/>
    <lineage>
        <taxon>Bacteria</taxon>
        <taxon>Pseudomonadati</taxon>
        <taxon>Myxococcota</taxon>
        <taxon>Myxococcia</taxon>
        <taxon>Myxococcales</taxon>
        <taxon>Cystobacterineae</taxon>
        <taxon>Anaeromyxobacteraceae</taxon>
        <taxon>Anaeromyxobacter</taxon>
    </lineage>
</organism>
<sequence length="238" mass="24530">MLVIPAIDLIGGEVVRLEKGDFARKTVYARDPAEKAAELVRDGASLIHVVDLDGAKAGWPVNLDAVRAICAVPGAEVELGGGLRSLPDIEKVLELGVRYVVLGTAAVERLDLVRQACARFPGRVRSGIDARNGEVKIAGWLEGTGLGAAEVARRVKEAGVGLVEYTDVGRDGMFTGVDAEGAARLQAEAGVQVVASGGVAGLDDVRACRAAGLAGVIVGKALYEGRIALAEAVRAAAE</sequence>
<reference key="1">
    <citation type="submission" date="2008-08" db="EMBL/GenBank/DDBJ databases">
        <title>Complete sequence of Anaeromyxobacter sp. K.</title>
        <authorList>
            <consortium name="US DOE Joint Genome Institute"/>
            <person name="Lucas S."/>
            <person name="Copeland A."/>
            <person name="Lapidus A."/>
            <person name="Glavina del Rio T."/>
            <person name="Dalin E."/>
            <person name="Tice H."/>
            <person name="Bruce D."/>
            <person name="Goodwin L."/>
            <person name="Pitluck S."/>
            <person name="Saunders E."/>
            <person name="Brettin T."/>
            <person name="Detter J.C."/>
            <person name="Han C."/>
            <person name="Larimer F."/>
            <person name="Land M."/>
            <person name="Hauser L."/>
            <person name="Kyrpides N."/>
            <person name="Ovchinnikiva G."/>
            <person name="Beliaev A."/>
        </authorList>
    </citation>
    <scope>NUCLEOTIDE SEQUENCE [LARGE SCALE GENOMIC DNA]</scope>
    <source>
        <strain>K</strain>
    </source>
</reference>
<dbReference type="EC" id="5.3.1.16" evidence="1"/>
<dbReference type="EMBL" id="CP001131">
    <property type="protein sequence ID" value="ACG71990.1"/>
    <property type="molecule type" value="Genomic_DNA"/>
</dbReference>
<dbReference type="RefSeq" id="WP_012524818.1">
    <property type="nucleotide sequence ID" value="NC_011145.1"/>
</dbReference>
<dbReference type="SMR" id="B4UDJ9"/>
<dbReference type="KEGG" id="ank:AnaeK_0751"/>
<dbReference type="HOGENOM" id="CLU_048577_1_1_7"/>
<dbReference type="OrthoDB" id="9807749at2"/>
<dbReference type="UniPathway" id="UPA00031">
    <property type="reaction ID" value="UER00009"/>
</dbReference>
<dbReference type="Proteomes" id="UP000001871">
    <property type="component" value="Chromosome"/>
</dbReference>
<dbReference type="GO" id="GO:0005737">
    <property type="term" value="C:cytoplasm"/>
    <property type="evidence" value="ECO:0007669"/>
    <property type="project" value="UniProtKB-SubCell"/>
</dbReference>
<dbReference type="GO" id="GO:0003949">
    <property type="term" value="F:1-(5-phosphoribosyl)-5-[(5-phosphoribosylamino)methylideneamino]imidazole-4-carboxamide isomerase activity"/>
    <property type="evidence" value="ECO:0007669"/>
    <property type="project" value="UniProtKB-UniRule"/>
</dbReference>
<dbReference type="GO" id="GO:0000105">
    <property type="term" value="P:L-histidine biosynthetic process"/>
    <property type="evidence" value="ECO:0007669"/>
    <property type="project" value="UniProtKB-UniRule"/>
</dbReference>
<dbReference type="GO" id="GO:0000162">
    <property type="term" value="P:L-tryptophan biosynthetic process"/>
    <property type="evidence" value="ECO:0007669"/>
    <property type="project" value="TreeGrafter"/>
</dbReference>
<dbReference type="CDD" id="cd04732">
    <property type="entry name" value="HisA"/>
    <property type="match status" value="1"/>
</dbReference>
<dbReference type="FunFam" id="3.20.20.70:FF:000009">
    <property type="entry name" value="1-(5-phosphoribosyl)-5-[(5-phosphoribosylamino)methylideneamino] imidazole-4-carboxamide isomerase"/>
    <property type="match status" value="1"/>
</dbReference>
<dbReference type="Gene3D" id="3.20.20.70">
    <property type="entry name" value="Aldolase class I"/>
    <property type="match status" value="1"/>
</dbReference>
<dbReference type="HAMAP" id="MF_01014">
    <property type="entry name" value="HisA"/>
    <property type="match status" value="1"/>
</dbReference>
<dbReference type="InterPro" id="IPR013785">
    <property type="entry name" value="Aldolase_TIM"/>
</dbReference>
<dbReference type="InterPro" id="IPR006062">
    <property type="entry name" value="His_biosynth"/>
</dbReference>
<dbReference type="InterPro" id="IPR006063">
    <property type="entry name" value="HisA_bact_arch"/>
</dbReference>
<dbReference type="InterPro" id="IPR044524">
    <property type="entry name" value="Isoase_HisA-like"/>
</dbReference>
<dbReference type="InterPro" id="IPR023016">
    <property type="entry name" value="Isoase_HisA-like_bact"/>
</dbReference>
<dbReference type="InterPro" id="IPR011060">
    <property type="entry name" value="RibuloseP-bd_barrel"/>
</dbReference>
<dbReference type="NCBIfam" id="TIGR00007">
    <property type="entry name" value="1-(5-phosphoribosyl)-5-[(5-phosphoribosylamino)methylideneamino]imidazole-4-carboxamide isomerase"/>
    <property type="match status" value="1"/>
</dbReference>
<dbReference type="PANTHER" id="PTHR43090">
    <property type="entry name" value="1-(5-PHOSPHORIBOSYL)-5-[(5-PHOSPHORIBOSYLAMINO)METHYLIDENEAMINO] IMIDAZOLE-4-CARBOXAMIDE ISOMERASE"/>
    <property type="match status" value="1"/>
</dbReference>
<dbReference type="PANTHER" id="PTHR43090:SF2">
    <property type="entry name" value="1-(5-PHOSPHORIBOSYL)-5-[(5-PHOSPHORIBOSYLAMINO)METHYLIDENEAMINO] IMIDAZOLE-4-CARBOXAMIDE ISOMERASE"/>
    <property type="match status" value="1"/>
</dbReference>
<dbReference type="Pfam" id="PF00977">
    <property type="entry name" value="His_biosynth"/>
    <property type="match status" value="1"/>
</dbReference>
<dbReference type="SUPFAM" id="SSF51366">
    <property type="entry name" value="Ribulose-phoshate binding barrel"/>
    <property type="match status" value="1"/>
</dbReference>